<evidence type="ECO:0000255" key="1"/>
<evidence type="ECO:0000255" key="2">
    <source>
        <dbReference type="PROSITE-ProRule" id="PRU00298"/>
    </source>
</evidence>
<evidence type="ECO:0000269" key="3">
    <source>
    </source>
</evidence>
<evidence type="ECO:0000269" key="4">
    <source>
    </source>
</evidence>
<evidence type="ECO:0000305" key="5"/>
<evidence type="ECO:0007829" key="6">
    <source>
        <dbReference type="PDB" id="6ERC"/>
    </source>
</evidence>
<dbReference type="EC" id="1.11.1.7"/>
<dbReference type="EMBL" id="AY392429">
    <property type="protein sequence ID" value="AAQ98871.1"/>
    <property type="molecule type" value="Genomic_DNA"/>
</dbReference>
<dbReference type="EMBL" id="AAFI02000019">
    <property type="protein sequence ID" value="EAL68824.1"/>
    <property type="molecule type" value="Genomic_DNA"/>
</dbReference>
<dbReference type="RefSeq" id="XP_642775.1">
    <property type="nucleotide sequence ID" value="XM_637683.1"/>
</dbReference>
<dbReference type="PDB" id="6ERC">
    <property type="method" value="X-ray"/>
    <property type="resolution" value="2.50 A"/>
    <property type="chains" value="A/B=21-531"/>
</dbReference>
<dbReference type="PDBsum" id="6ERC"/>
<dbReference type="SMR" id="Q6TMK4"/>
<dbReference type="FunCoup" id="Q6TMK4">
    <property type="interactions" value="3"/>
</dbReference>
<dbReference type="STRING" id="44689.Q6TMK4"/>
<dbReference type="PeroxiBase" id="4094">
    <property type="entry name" value="DdPxDo01"/>
</dbReference>
<dbReference type="GlyCosmos" id="Q6TMK4">
    <property type="glycosylation" value="3 sites, No reported glycans"/>
</dbReference>
<dbReference type="GlyGen" id="Q6TMK4">
    <property type="glycosylation" value="3 sites"/>
</dbReference>
<dbReference type="PaxDb" id="44689-DDB0191269"/>
<dbReference type="EnsemblProtists" id="EAL68824">
    <property type="protein sequence ID" value="EAL68824"/>
    <property type="gene ID" value="DDB_G0277275"/>
</dbReference>
<dbReference type="GeneID" id="8620966"/>
<dbReference type="KEGG" id="ddi:DDB_G0277275"/>
<dbReference type="dictyBase" id="DDB_G0277275">
    <property type="gene designation" value="poxA"/>
</dbReference>
<dbReference type="VEuPathDB" id="AmoebaDB:DDB_G0277275"/>
<dbReference type="eggNOG" id="KOG2408">
    <property type="taxonomic scope" value="Eukaryota"/>
</dbReference>
<dbReference type="HOGENOM" id="CLU_006087_2_2_1"/>
<dbReference type="InParanoid" id="Q6TMK4"/>
<dbReference type="OMA" id="RYQPMGP"/>
<dbReference type="PhylomeDB" id="Q6TMK4"/>
<dbReference type="Reactome" id="R-DDI-209968">
    <property type="pathway name" value="Thyroxine biosynthesis"/>
</dbReference>
<dbReference type="Reactome" id="R-DDI-6798695">
    <property type="pathway name" value="Neutrophil degranulation"/>
</dbReference>
<dbReference type="Reactome" id="R-DDI-8941413">
    <property type="pathway name" value="Events associated with phagocytolytic activity of PMN cells"/>
</dbReference>
<dbReference type="PRO" id="PR:Q6TMK4"/>
<dbReference type="Proteomes" id="UP000002195">
    <property type="component" value="Chromosome 2"/>
</dbReference>
<dbReference type="GO" id="GO:0005783">
    <property type="term" value="C:endoplasmic reticulum"/>
    <property type="evidence" value="ECO:0000314"/>
    <property type="project" value="dictyBase"/>
</dbReference>
<dbReference type="GO" id="GO:0005576">
    <property type="term" value="C:extracellular region"/>
    <property type="evidence" value="ECO:0000304"/>
    <property type="project" value="dictyBase"/>
</dbReference>
<dbReference type="GO" id="GO:0020037">
    <property type="term" value="F:heme binding"/>
    <property type="evidence" value="ECO:0000314"/>
    <property type="project" value="dictyBase"/>
</dbReference>
<dbReference type="GO" id="GO:0004447">
    <property type="term" value="F:iodide peroxidase activity"/>
    <property type="evidence" value="ECO:0000314"/>
    <property type="project" value="dictyBase"/>
</dbReference>
<dbReference type="GO" id="GO:0140825">
    <property type="term" value="F:lactoperoxidase activity"/>
    <property type="evidence" value="ECO:0007669"/>
    <property type="project" value="UniProtKB-EC"/>
</dbReference>
<dbReference type="GO" id="GO:0004601">
    <property type="term" value="F:peroxidase activity"/>
    <property type="evidence" value="ECO:0000314"/>
    <property type="project" value="dictyBase"/>
</dbReference>
<dbReference type="GO" id="GO:0036393">
    <property type="term" value="F:thiocyanate peroxidase activity"/>
    <property type="evidence" value="ECO:0000314"/>
    <property type="project" value="dictyBase"/>
</dbReference>
<dbReference type="GO" id="GO:0042742">
    <property type="term" value="P:defense response to bacterium"/>
    <property type="evidence" value="ECO:0000315"/>
    <property type="project" value="dictyBase"/>
</dbReference>
<dbReference type="GO" id="GO:0042744">
    <property type="term" value="P:hydrogen peroxide catabolic process"/>
    <property type="evidence" value="ECO:0007669"/>
    <property type="project" value="UniProtKB-KW"/>
</dbReference>
<dbReference type="GO" id="GO:0006955">
    <property type="term" value="P:immune response"/>
    <property type="evidence" value="ECO:0000250"/>
    <property type="project" value="dictyBase"/>
</dbReference>
<dbReference type="GO" id="GO:0006979">
    <property type="term" value="P:response to oxidative stress"/>
    <property type="evidence" value="ECO:0007669"/>
    <property type="project" value="InterPro"/>
</dbReference>
<dbReference type="CDD" id="cd09822">
    <property type="entry name" value="peroxinectin_like_bacterial"/>
    <property type="match status" value="1"/>
</dbReference>
<dbReference type="FunFam" id="1.10.640.10:FF:000018">
    <property type="entry name" value="Peroxinectin A"/>
    <property type="match status" value="1"/>
</dbReference>
<dbReference type="Gene3D" id="1.10.640.10">
    <property type="entry name" value="Haem peroxidase domain superfamily, animal type"/>
    <property type="match status" value="1"/>
</dbReference>
<dbReference type="InterPro" id="IPR019791">
    <property type="entry name" value="Haem_peroxidase_animal"/>
</dbReference>
<dbReference type="InterPro" id="IPR010255">
    <property type="entry name" value="Haem_peroxidase_sf"/>
</dbReference>
<dbReference type="InterPro" id="IPR037120">
    <property type="entry name" value="Haem_peroxidase_sf_animal"/>
</dbReference>
<dbReference type="PANTHER" id="PTHR11475:SF4">
    <property type="entry name" value="CHORION PEROXIDASE"/>
    <property type="match status" value="1"/>
</dbReference>
<dbReference type="PANTHER" id="PTHR11475">
    <property type="entry name" value="OXIDASE/PEROXIDASE"/>
    <property type="match status" value="1"/>
</dbReference>
<dbReference type="Pfam" id="PF03098">
    <property type="entry name" value="An_peroxidase"/>
    <property type="match status" value="1"/>
</dbReference>
<dbReference type="PRINTS" id="PR00457">
    <property type="entry name" value="ANPEROXIDASE"/>
</dbReference>
<dbReference type="SUPFAM" id="SSF48113">
    <property type="entry name" value="Heme-dependent peroxidases"/>
    <property type="match status" value="1"/>
</dbReference>
<dbReference type="PROSITE" id="PS50292">
    <property type="entry name" value="PEROXIDASE_3"/>
    <property type="match status" value="1"/>
</dbReference>
<feature type="signal peptide" evidence="1">
    <location>
        <begin position="1"/>
        <end position="21"/>
    </location>
</feature>
<feature type="chain" id="PRO_0000386630" description="Peroxinectin A">
    <location>
        <begin position="22"/>
        <end position="531"/>
    </location>
</feature>
<feature type="active site" description="Proton acceptor" evidence="2">
    <location>
        <position position="101"/>
    </location>
</feature>
<feature type="site" description="Transition state stabilizer" evidence="2">
    <location>
        <position position="233"/>
    </location>
</feature>
<feature type="glycosylation site" description="N-linked (GlcNAc...) asparagine" evidence="1">
    <location>
        <position position="62"/>
    </location>
</feature>
<feature type="glycosylation site" description="N-linked (GlcNAc...) asparagine" evidence="1">
    <location>
        <position position="131"/>
    </location>
</feature>
<feature type="glycosylation site" description="N-linked (GlcNAc...) asparagine" evidence="1">
    <location>
        <position position="338"/>
    </location>
</feature>
<feature type="strand" evidence="6">
    <location>
        <begin position="27"/>
        <end position="29"/>
    </location>
</feature>
<feature type="strand" evidence="6">
    <location>
        <begin position="32"/>
        <end position="36"/>
    </location>
</feature>
<feature type="turn" evidence="6">
    <location>
        <begin position="37"/>
        <end position="40"/>
    </location>
</feature>
<feature type="strand" evidence="6">
    <location>
        <begin position="42"/>
        <end position="45"/>
    </location>
</feature>
<feature type="helix" evidence="6">
    <location>
        <begin position="68"/>
        <end position="75"/>
    </location>
</feature>
<feature type="helix" evidence="6">
    <location>
        <begin position="90"/>
        <end position="100"/>
    </location>
</feature>
<feature type="turn" evidence="6">
    <location>
        <begin position="101"/>
        <end position="103"/>
    </location>
</feature>
<feature type="strand" evidence="6">
    <location>
        <begin position="108"/>
        <end position="112"/>
    </location>
</feature>
<feature type="turn" evidence="6">
    <location>
        <begin position="122"/>
        <end position="124"/>
    </location>
</feature>
<feature type="strand" evidence="6">
    <location>
        <begin position="137"/>
        <end position="139"/>
    </location>
</feature>
<feature type="strand" evidence="6">
    <location>
        <begin position="141"/>
        <end position="144"/>
    </location>
</feature>
<feature type="strand" evidence="6">
    <location>
        <begin position="148"/>
        <end position="150"/>
    </location>
</feature>
<feature type="strand" evidence="6">
    <location>
        <begin position="159"/>
        <end position="164"/>
    </location>
</feature>
<feature type="helix" evidence="6">
    <location>
        <begin position="173"/>
        <end position="176"/>
    </location>
</feature>
<feature type="helix" evidence="6">
    <location>
        <begin position="180"/>
        <end position="186"/>
    </location>
</feature>
<feature type="strand" evidence="6">
    <location>
        <begin position="197"/>
        <end position="199"/>
    </location>
</feature>
<feature type="strand" evidence="6">
    <location>
        <begin position="202"/>
        <end position="204"/>
    </location>
</feature>
<feature type="helix" evidence="6">
    <location>
        <begin position="223"/>
        <end position="225"/>
    </location>
</feature>
<feature type="helix" evidence="6">
    <location>
        <begin position="232"/>
        <end position="235"/>
    </location>
</feature>
<feature type="helix" evidence="6">
    <location>
        <begin position="238"/>
        <end position="261"/>
    </location>
</feature>
<feature type="helix" evidence="6">
    <location>
        <begin position="267"/>
        <end position="288"/>
    </location>
</feature>
<feature type="helix" evidence="6">
    <location>
        <begin position="290"/>
        <end position="295"/>
    </location>
</feature>
<feature type="helix" evidence="6">
    <location>
        <begin position="314"/>
        <end position="318"/>
    </location>
</feature>
<feature type="helix" evidence="6">
    <location>
        <begin position="320"/>
        <end position="323"/>
    </location>
</feature>
<feature type="helix" evidence="6">
    <location>
        <begin position="324"/>
        <end position="327"/>
    </location>
</feature>
<feature type="strand" evidence="6">
    <location>
        <begin position="330"/>
        <end position="335"/>
    </location>
</feature>
<feature type="strand" evidence="6">
    <location>
        <begin position="341"/>
        <end position="346"/>
    </location>
</feature>
<feature type="helix" evidence="6">
    <location>
        <begin position="347"/>
        <end position="349"/>
    </location>
</feature>
<feature type="turn" evidence="6">
    <location>
        <begin position="350"/>
        <end position="352"/>
    </location>
</feature>
<feature type="helix" evidence="6">
    <location>
        <begin position="354"/>
        <end position="357"/>
    </location>
</feature>
<feature type="helix" evidence="6">
    <location>
        <begin position="362"/>
        <end position="370"/>
    </location>
</feature>
<feature type="strand" evidence="6">
    <location>
        <begin position="376"/>
        <end position="378"/>
    </location>
</feature>
<feature type="helix" evidence="6">
    <location>
        <begin position="382"/>
        <end position="385"/>
    </location>
</feature>
<feature type="strand" evidence="6">
    <location>
        <begin position="389"/>
        <end position="391"/>
    </location>
</feature>
<feature type="helix" evidence="6">
    <location>
        <begin position="399"/>
        <end position="410"/>
    </location>
</feature>
<feature type="helix" evidence="6">
    <location>
        <begin position="415"/>
        <end position="421"/>
    </location>
</feature>
<feature type="helix" evidence="6">
    <location>
        <begin position="430"/>
        <end position="433"/>
    </location>
</feature>
<feature type="helix" evidence="6">
    <location>
        <begin position="437"/>
        <end position="446"/>
    </location>
</feature>
<feature type="helix" evidence="6">
    <location>
        <begin position="450"/>
        <end position="452"/>
    </location>
</feature>
<feature type="helix" evidence="6">
    <location>
        <begin position="455"/>
        <end position="461"/>
    </location>
</feature>
<feature type="strand" evidence="6">
    <location>
        <begin position="469"/>
        <end position="471"/>
    </location>
</feature>
<feature type="helix" evidence="6">
    <location>
        <begin position="472"/>
        <end position="487"/>
    </location>
</feature>
<feature type="helix" evidence="6">
    <location>
        <begin position="496"/>
        <end position="501"/>
    </location>
</feature>
<feature type="turn" evidence="6">
    <location>
        <begin position="502"/>
        <end position="504"/>
    </location>
</feature>
<feature type="helix" evidence="6">
    <location>
        <begin position="510"/>
        <end position="517"/>
    </location>
</feature>
<organism>
    <name type="scientific">Dictyostelium discoideum</name>
    <name type="common">Social amoeba</name>
    <dbReference type="NCBI Taxonomy" id="44689"/>
    <lineage>
        <taxon>Eukaryota</taxon>
        <taxon>Amoebozoa</taxon>
        <taxon>Evosea</taxon>
        <taxon>Eumycetozoa</taxon>
        <taxon>Dictyostelia</taxon>
        <taxon>Dictyosteliales</taxon>
        <taxon>Dictyosteliaceae</taxon>
        <taxon>Dictyostelium</taxon>
    </lineage>
</organism>
<keyword id="KW-0002">3D-structure</keyword>
<keyword id="KW-0325">Glycoprotein</keyword>
<keyword id="KW-0376">Hydrogen peroxide</keyword>
<keyword id="KW-0560">Oxidoreductase</keyword>
<keyword id="KW-0575">Peroxidase</keyword>
<keyword id="KW-1185">Reference proteome</keyword>
<keyword id="KW-0964">Secreted</keyword>
<keyword id="KW-0732">Signal</keyword>
<gene>
    <name type="primary">poxA</name>
    <name type="ORF">DDB_G0277275</name>
</gene>
<proteinExistence type="evidence at protein level"/>
<sequence>MRLNLISFFIIFTILVSISNSQEFRSYTGEGNNKQNPKQGSIFTPFIRLANPIKFNKNGFPNITNQPSRAISNIIFDQQTHIGSKEHLTDMFNMWGQFLIHNMALSKPEPNSWPIKVPKCDQYFDPACIGNKTMNYFRTRATEVPCDVGKTVVDEDGKCYEQINSLGSYIDGNVLYGNSEEICKNLRSLSGGEMKMTVTDVGDLPPKNVPGVPMDNDANLFPIDQLYSVGERRGNENPGLLSIHTLLLRDHNRLARKFARLHPEWDDERVFQQSRSCIIEQIQKITYDEYLPTTLGSFPSYTGYDANVNAQVSNEFTTTAFRFGHSEVGPFMEYYSENGTRLQPLPIKFSYFNPHALNRGVEPLIRGLIINEEENIDIYMISDLRNFLFGKPGQGGLDLASRNLQRNRDHGIPPYNSLRRQLGLRPVQTWSDITSDPQIQNRLKNAYKSVDDIDSYVGGLAEDHMEGSCVGQTFYLIIYEQFFRTRAGDRFWYETPEMRMVNRECETTTFAEVIKRTTSNIGYVQPNVFRK</sequence>
<accession>Q6TMK4</accession>
<accession>Q54ZU1</accession>
<reference key="1">
    <citation type="journal article" date="2004" name="Eukaryot. Cell">
        <title>Identification of genes dependent on the MADS box transcription factor SrfA in Dictyostelium discoideum development.</title>
        <authorList>
            <person name="Escalante R."/>
            <person name="Iranfar N."/>
            <person name="Sastre L."/>
            <person name="Loomis W.F."/>
        </authorList>
    </citation>
    <scope>NUCLEOTIDE SEQUENCE [GENOMIC DNA]</scope>
    <scope>DEVELOPMENTAL STAGE</scope>
    <scope>INDUCTION BY SRFA</scope>
</reference>
<reference key="2">
    <citation type="journal article" date="2002" name="Nature">
        <title>Sequence and analysis of chromosome 2 of Dictyostelium discoideum.</title>
        <authorList>
            <person name="Gloeckner G."/>
            <person name="Eichinger L."/>
            <person name="Szafranski K."/>
            <person name="Pachebat J.A."/>
            <person name="Bankier A.T."/>
            <person name="Dear P.H."/>
            <person name="Lehmann R."/>
            <person name="Baumgart C."/>
            <person name="Parra G."/>
            <person name="Abril J.F."/>
            <person name="Guigo R."/>
            <person name="Kumpf K."/>
            <person name="Tunggal B."/>
            <person name="Cox E.C."/>
            <person name="Quail M.A."/>
            <person name="Platzer M."/>
            <person name="Rosenthal A."/>
            <person name="Noegel A.A."/>
        </authorList>
    </citation>
    <scope>NUCLEOTIDE SEQUENCE [LARGE SCALE GENOMIC DNA]</scope>
    <source>
        <strain>AX4</strain>
    </source>
</reference>
<reference key="3">
    <citation type="journal article" date="2005" name="Nature">
        <title>The genome of the social amoeba Dictyostelium discoideum.</title>
        <authorList>
            <person name="Eichinger L."/>
            <person name="Pachebat J.A."/>
            <person name="Gloeckner G."/>
            <person name="Rajandream M.A."/>
            <person name="Sucgang R."/>
            <person name="Berriman M."/>
            <person name="Song J."/>
            <person name="Olsen R."/>
            <person name="Szafranski K."/>
            <person name="Xu Q."/>
            <person name="Tunggal B."/>
            <person name="Kummerfeld S."/>
            <person name="Madera M."/>
            <person name="Konfortov B.A."/>
            <person name="Rivero F."/>
            <person name="Bankier A.T."/>
            <person name="Lehmann R."/>
            <person name="Hamlin N."/>
            <person name="Davies R."/>
            <person name="Gaudet P."/>
            <person name="Fey P."/>
            <person name="Pilcher K."/>
            <person name="Chen G."/>
            <person name="Saunders D."/>
            <person name="Sodergren E.J."/>
            <person name="Davis P."/>
            <person name="Kerhornou A."/>
            <person name="Nie X."/>
            <person name="Hall N."/>
            <person name="Anjard C."/>
            <person name="Hemphill L."/>
            <person name="Bason N."/>
            <person name="Farbrother P."/>
            <person name="Desany B."/>
            <person name="Just E."/>
            <person name="Morio T."/>
            <person name="Rost R."/>
            <person name="Churcher C.M."/>
            <person name="Cooper J."/>
            <person name="Haydock S."/>
            <person name="van Driessche N."/>
            <person name="Cronin A."/>
            <person name="Goodhead I."/>
            <person name="Muzny D.M."/>
            <person name="Mourier T."/>
            <person name="Pain A."/>
            <person name="Lu M."/>
            <person name="Harper D."/>
            <person name="Lindsay R."/>
            <person name="Hauser H."/>
            <person name="James K.D."/>
            <person name="Quiles M."/>
            <person name="Madan Babu M."/>
            <person name="Saito T."/>
            <person name="Buchrieser C."/>
            <person name="Wardroper A."/>
            <person name="Felder M."/>
            <person name="Thangavelu M."/>
            <person name="Johnson D."/>
            <person name="Knights A."/>
            <person name="Loulseged H."/>
            <person name="Mungall K.L."/>
            <person name="Oliver K."/>
            <person name="Price C."/>
            <person name="Quail M.A."/>
            <person name="Urushihara H."/>
            <person name="Hernandez J."/>
            <person name="Rabbinowitsch E."/>
            <person name="Steffen D."/>
            <person name="Sanders M."/>
            <person name="Ma J."/>
            <person name="Kohara Y."/>
            <person name="Sharp S."/>
            <person name="Simmonds M.N."/>
            <person name="Spiegler S."/>
            <person name="Tivey A."/>
            <person name="Sugano S."/>
            <person name="White B."/>
            <person name="Walker D."/>
            <person name="Woodward J.R."/>
            <person name="Winckler T."/>
            <person name="Tanaka Y."/>
            <person name="Shaulsky G."/>
            <person name="Schleicher M."/>
            <person name="Weinstock G.M."/>
            <person name="Rosenthal A."/>
            <person name="Cox E.C."/>
            <person name="Chisholm R.L."/>
            <person name="Gibbs R.A."/>
            <person name="Loomis W.F."/>
            <person name="Platzer M."/>
            <person name="Kay R.R."/>
            <person name="Williams J.G."/>
            <person name="Dear P.H."/>
            <person name="Noegel A.A."/>
            <person name="Barrell B.G."/>
            <person name="Kuspa A."/>
        </authorList>
    </citation>
    <scope>NUCLEOTIDE SEQUENCE [LARGE SCALE GENOMIC DNA]</scope>
    <source>
        <strain>AX4</strain>
    </source>
</reference>
<reference key="4">
    <citation type="journal article" date="2007" name="Dev. Biol.">
        <title>A GPCR involved in post aggregation events in Dictyostelium discoideum.</title>
        <authorList>
            <person name="Prabhu Y."/>
            <person name="Mondal S."/>
            <person name="Eichinger L."/>
            <person name="Noegel A.A."/>
        </authorList>
    </citation>
    <scope>DEVELOPMENTAL STAGE</scope>
    <scope>INDUCTION [LARGE SCALE ANALYSIS]</scope>
</reference>
<name>POXA_DICDI</name>
<protein>
    <recommendedName>
        <fullName>Peroxinectin A</fullName>
        <ecNumber>1.11.1.7</ecNumber>
    </recommendedName>
</protein>
<comment type="catalytic activity">
    <reaction>
        <text>2 a phenolic donor + H2O2 = 2 a phenolic radical donor + 2 H2O</text>
        <dbReference type="Rhea" id="RHEA:56136"/>
        <dbReference type="ChEBI" id="CHEBI:15377"/>
        <dbReference type="ChEBI" id="CHEBI:16240"/>
        <dbReference type="ChEBI" id="CHEBI:139520"/>
        <dbReference type="ChEBI" id="CHEBI:139521"/>
        <dbReference type="EC" id="1.11.1.7"/>
    </reaction>
</comment>
<comment type="subcellular location">
    <subcellularLocation>
        <location evidence="5">Secreted</location>
    </subcellularLocation>
</comment>
<comment type="developmental stage">
    <text evidence="3 4">Expressed in late developmental stage, exclusively during culmination.</text>
</comment>
<comment type="induction">
    <text evidence="3 4">Induced by srfA, during development. Down-regulated in grlA null-cells at 16 hours of starvation.</text>
</comment>
<comment type="similarity">
    <text evidence="2">Belongs to the peroxidase family.</text>
</comment>